<gene>
    <name evidence="5" type="primary">LysM10</name>
    <name type="ORF">PEX2_008300</name>
</gene>
<organism>
    <name type="scientific">Penicillium expansum</name>
    <name type="common">Blue mold rot fungus</name>
    <dbReference type="NCBI Taxonomy" id="27334"/>
    <lineage>
        <taxon>Eukaryota</taxon>
        <taxon>Fungi</taxon>
        <taxon>Dikarya</taxon>
        <taxon>Ascomycota</taxon>
        <taxon>Pezizomycotina</taxon>
        <taxon>Eurotiomycetes</taxon>
        <taxon>Eurotiomycetidae</taxon>
        <taxon>Eurotiales</taxon>
        <taxon>Aspergillaceae</taxon>
        <taxon>Penicillium</taxon>
    </lineage>
</organism>
<reference key="1">
    <citation type="journal article" date="2015" name="Mol. Plant Microbe Interact.">
        <title>Genome, transcriptome, and functional analyses of Penicillium expansum provide new insights into secondary metabolism and pathogenicity.</title>
        <authorList>
            <person name="Ballester A.R."/>
            <person name="Marcet-Houben M."/>
            <person name="Levin E."/>
            <person name="Sela N."/>
            <person name="Selma-Lazaro C."/>
            <person name="Carmona L."/>
            <person name="Wisniewski M."/>
            <person name="Droby S."/>
            <person name="Gonzalez-Candelas L."/>
            <person name="Gabaldon T."/>
        </authorList>
    </citation>
    <scope>NUCLEOTIDE SEQUENCE [LARGE SCALE GENOMIC DNA]</scope>
    <source>
        <strain>MD-8</strain>
    </source>
</reference>
<reference key="2">
    <citation type="journal article" date="2020" name="Mol. Genet. Genomics">
        <title>Multiple transcriptomic analyses and characterization of pathogen-related core effectors and LysM family members reveal their differential roles in fungal growth and pathogenicity in Penicillium expansum.</title>
        <authorList>
            <person name="Chen D."/>
            <person name="Li G."/>
            <person name="Liu J."/>
            <person name="Wisniewski M."/>
            <person name="Droby S."/>
            <person name="Levin E."/>
            <person name="Huang S."/>
            <person name="Liu Y."/>
        </authorList>
    </citation>
    <scope>FUNCTION</scope>
    <scope>DISRUPTION PHENOTYPE</scope>
    <scope>DOMAIN</scope>
</reference>
<feature type="signal peptide" evidence="1">
    <location>
        <begin position="1"/>
        <end position="22"/>
    </location>
</feature>
<feature type="chain" id="PRO_5009752588" description="Secreted LysM effector LysM10">
    <location>
        <begin position="23"/>
        <end position="276"/>
    </location>
</feature>
<feature type="domain" description="LysM" evidence="3">
    <location>
        <begin position="219"/>
        <end position="264"/>
    </location>
</feature>
<feature type="glycosylation site" description="N-linked (GlcNAc...) asparagine" evidence="2">
    <location>
        <position position="27"/>
    </location>
</feature>
<feature type="glycosylation site" description="N-linked (GlcNAc...) asparagine" evidence="2">
    <location>
        <position position="104"/>
    </location>
</feature>
<feature type="glycosylation site" description="N-linked (GlcNAc...) asparagine" evidence="2">
    <location>
        <position position="140"/>
    </location>
</feature>
<feature type="glycosylation site" description="N-linked (GlcNAc...) asparagine" evidence="2">
    <location>
        <position position="267"/>
    </location>
</feature>
<dbReference type="EMBL" id="JQFZ01000281">
    <property type="protein sequence ID" value="KGO51713.1"/>
    <property type="molecule type" value="Genomic_DNA"/>
</dbReference>
<dbReference type="RefSeq" id="XP_016594633.1">
    <property type="nucleotide sequence ID" value="XM_016738107.1"/>
</dbReference>
<dbReference type="SMR" id="A0A0A2JAR6"/>
<dbReference type="STRING" id="27334.A0A0A2JAR6"/>
<dbReference type="GeneID" id="27673526"/>
<dbReference type="VEuPathDB" id="FungiDB:PEXP_076740"/>
<dbReference type="HOGENOM" id="CLU_1008667_0_0_1"/>
<dbReference type="OrthoDB" id="5985073at2759"/>
<dbReference type="PhylomeDB" id="A0A0A2JAR6"/>
<dbReference type="Proteomes" id="UP000030143">
    <property type="component" value="Unassembled WGS sequence"/>
</dbReference>
<dbReference type="GO" id="GO:0005576">
    <property type="term" value="C:extracellular region"/>
    <property type="evidence" value="ECO:0007669"/>
    <property type="project" value="UniProtKB-SubCell"/>
</dbReference>
<dbReference type="GO" id="GO:0008061">
    <property type="term" value="F:chitin binding"/>
    <property type="evidence" value="ECO:0007669"/>
    <property type="project" value="UniProtKB-KW"/>
</dbReference>
<dbReference type="Gene3D" id="3.10.350.10">
    <property type="entry name" value="LysM domain"/>
    <property type="match status" value="1"/>
</dbReference>
<dbReference type="InterPro" id="IPR018392">
    <property type="entry name" value="LysM_dom"/>
</dbReference>
<dbReference type="InterPro" id="IPR036779">
    <property type="entry name" value="LysM_dom_sf"/>
</dbReference>
<dbReference type="Pfam" id="PF01476">
    <property type="entry name" value="LysM"/>
    <property type="match status" value="1"/>
</dbReference>
<dbReference type="SUPFAM" id="SSF54106">
    <property type="entry name" value="LysM domain"/>
    <property type="match status" value="1"/>
</dbReference>
<dbReference type="PROSITE" id="PS51782">
    <property type="entry name" value="LYSM"/>
    <property type="match status" value="1"/>
</dbReference>
<evidence type="ECO:0000255" key="1"/>
<evidence type="ECO:0000255" key="2">
    <source>
        <dbReference type="PROSITE-ProRule" id="PRU00498"/>
    </source>
</evidence>
<evidence type="ECO:0000255" key="3">
    <source>
        <dbReference type="PROSITE-ProRule" id="PRU01118"/>
    </source>
</evidence>
<evidence type="ECO:0000269" key="4">
    <source>
    </source>
</evidence>
<evidence type="ECO:0000303" key="5">
    <source>
    </source>
</evidence>
<evidence type="ECO:0000305" key="6"/>
<evidence type="ECO:0000305" key="7">
    <source>
    </source>
</evidence>
<sequence>MLLSLVKFGILSVFLLAQEAVAIQLWNNTDGFSDDVPAAGRSALTFDVKCANYLVTARDVANGAALVGNLESHYCTEECHDSIDNFQRSSHLAYGTKAYALFKNSTARVVPGDIVNGLMWAYELSCIKDSTGYCLAGIYNHTKTACSECTLKYGAVMASSGYGRKQFPPNVFSSLLSSCNVPASSYTYVYTSSNPTTTPESSGVPSSATATPTSTCTGKTYIAKEDDTCKSISEAQSISTDRLVEVNHLDYSCSSLTSGTALCIEKNCTVYTVQAN</sequence>
<proteinExistence type="inferred from homology"/>
<protein>
    <recommendedName>
        <fullName evidence="5">Secreted LysM effector LysM10</fullName>
    </recommendedName>
    <alternativeName>
        <fullName evidence="5">LysM domain-containing protein 10</fullName>
    </alternativeName>
</protein>
<comment type="function">
    <text evidence="7">Secreted LysM effector that might have a role in sequestration of chitin oligosaccharides (breakdown products of fungal cell walls that are released during invasion and act as triggers of host immunity) to dampen host defense.</text>
</comment>
<comment type="subcellular location">
    <subcellularLocation>
        <location evidence="7">Secreted</location>
    </subcellularLocation>
</comment>
<comment type="domain">
    <text evidence="7">The LysM (lysin motif) domains are small globular domains involved in binding chitin in eukaryotes. LysM10 contains one LysM domain.</text>
</comment>
<comment type="disruption phenotype">
    <text evidence="4">Leads to enhanced fungal virulence, with faster decaying on infected fruits.</text>
</comment>
<comment type="miscellaneous">
    <text evidence="6">In plants, chitin acts as a microbe-associated molecular pattern (MAMP) that is recognized by lysin motif (LysM)-containing plant cell surface-localized pattern recognition receptors (PRRs) that activate a plethora of downstream immune responses.</text>
</comment>
<comment type="similarity">
    <text evidence="6">Belongs to the secreted LysM effector family.</text>
</comment>
<keyword id="KW-0147">Chitin-binding</keyword>
<keyword id="KW-0325">Glycoprotein</keyword>
<keyword id="KW-1185">Reference proteome</keyword>
<keyword id="KW-0964">Secreted</keyword>
<keyword id="KW-0732">Signal</keyword>
<keyword id="KW-0843">Virulence</keyword>
<accession>A0A0A2JAR6</accession>
<name>LYS10_PENEN</name>